<name>APT_SOLUE</name>
<evidence type="ECO:0000255" key="1">
    <source>
        <dbReference type="HAMAP-Rule" id="MF_00004"/>
    </source>
</evidence>
<organism>
    <name type="scientific">Solibacter usitatus (strain Ellin6076)</name>
    <dbReference type="NCBI Taxonomy" id="234267"/>
    <lineage>
        <taxon>Bacteria</taxon>
        <taxon>Pseudomonadati</taxon>
        <taxon>Acidobacteriota</taxon>
        <taxon>Terriglobia</taxon>
        <taxon>Bryobacterales</taxon>
        <taxon>Solibacteraceae</taxon>
        <taxon>Candidatus Solibacter</taxon>
    </lineage>
</organism>
<sequence>MPDLKSLIREVPDFPKPGILFYDITTLLKDPSGFHGVIDGLKDHYRDIKVDTVLGIEARGFIFAPALAYALGAGFVPVRKPKKLPAECVRITYDLEYGTDTLEMHKDAIGNGHRVLIVDDLLATGGTASAAARMVQDAGGIVVGLGFVIELTFLAGRQRLNGHDVFSLLQYDK</sequence>
<protein>
    <recommendedName>
        <fullName evidence="1">Adenine phosphoribosyltransferase</fullName>
        <shortName evidence="1">APRT</shortName>
        <ecNumber evidence="1">2.4.2.7</ecNumber>
    </recommendedName>
</protein>
<keyword id="KW-0963">Cytoplasm</keyword>
<keyword id="KW-0328">Glycosyltransferase</keyword>
<keyword id="KW-0660">Purine salvage</keyword>
<keyword id="KW-0808">Transferase</keyword>
<feature type="chain" id="PRO_1000000344" description="Adenine phosphoribosyltransferase">
    <location>
        <begin position="1"/>
        <end position="173"/>
    </location>
</feature>
<dbReference type="EC" id="2.4.2.7" evidence="1"/>
<dbReference type="EMBL" id="CP000473">
    <property type="protein sequence ID" value="ABJ88011.1"/>
    <property type="molecule type" value="Genomic_DNA"/>
</dbReference>
<dbReference type="SMR" id="Q01QQ9"/>
<dbReference type="FunCoup" id="Q01QQ9">
    <property type="interactions" value="462"/>
</dbReference>
<dbReference type="STRING" id="234267.Acid_7098"/>
<dbReference type="KEGG" id="sus:Acid_7098"/>
<dbReference type="eggNOG" id="COG0503">
    <property type="taxonomic scope" value="Bacteria"/>
</dbReference>
<dbReference type="HOGENOM" id="CLU_063339_3_0_0"/>
<dbReference type="InParanoid" id="Q01QQ9"/>
<dbReference type="OrthoDB" id="9803963at2"/>
<dbReference type="UniPathway" id="UPA00588">
    <property type="reaction ID" value="UER00646"/>
</dbReference>
<dbReference type="GO" id="GO:0005737">
    <property type="term" value="C:cytoplasm"/>
    <property type="evidence" value="ECO:0007669"/>
    <property type="project" value="UniProtKB-SubCell"/>
</dbReference>
<dbReference type="GO" id="GO:0002055">
    <property type="term" value="F:adenine binding"/>
    <property type="evidence" value="ECO:0007669"/>
    <property type="project" value="TreeGrafter"/>
</dbReference>
<dbReference type="GO" id="GO:0003999">
    <property type="term" value="F:adenine phosphoribosyltransferase activity"/>
    <property type="evidence" value="ECO:0007669"/>
    <property type="project" value="UniProtKB-UniRule"/>
</dbReference>
<dbReference type="GO" id="GO:0016208">
    <property type="term" value="F:AMP binding"/>
    <property type="evidence" value="ECO:0007669"/>
    <property type="project" value="TreeGrafter"/>
</dbReference>
<dbReference type="GO" id="GO:0006168">
    <property type="term" value="P:adenine salvage"/>
    <property type="evidence" value="ECO:0007669"/>
    <property type="project" value="InterPro"/>
</dbReference>
<dbReference type="GO" id="GO:0044209">
    <property type="term" value="P:AMP salvage"/>
    <property type="evidence" value="ECO:0007669"/>
    <property type="project" value="UniProtKB-UniRule"/>
</dbReference>
<dbReference type="GO" id="GO:0006166">
    <property type="term" value="P:purine ribonucleoside salvage"/>
    <property type="evidence" value="ECO:0007669"/>
    <property type="project" value="UniProtKB-KW"/>
</dbReference>
<dbReference type="CDD" id="cd06223">
    <property type="entry name" value="PRTases_typeI"/>
    <property type="match status" value="1"/>
</dbReference>
<dbReference type="FunFam" id="3.40.50.2020:FF:000021">
    <property type="entry name" value="Adenine phosphoribosyltransferase"/>
    <property type="match status" value="1"/>
</dbReference>
<dbReference type="Gene3D" id="3.40.50.2020">
    <property type="match status" value="1"/>
</dbReference>
<dbReference type="HAMAP" id="MF_00004">
    <property type="entry name" value="Aden_phosphoribosyltr"/>
    <property type="match status" value="1"/>
</dbReference>
<dbReference type="InterPro" id="IPR005764">
    <property type="entry name" value="Ade_phspho_trans"/>
</dbReference>
<dbReference type="InterPro" id="IPR000836">
    <property type="entry name" value="PRibTrfase_dom"/>
</dbReference>
<dbReference type="InterPro" id="IPR029057">
    <property type="entry name" value="PRTase-like"/>
</dbReference>
<dbReference type="InterPro" id="IPR050054">
    <property type="entry name" value="UPRTase/APRTase"/>
</dbReference>
<dbReference type="NCBIfam" id="TIGR01090">
    <property type="entry name" value="apt"/>
    <property type="match status" value="1"/>
</dbReference>
<dbReference type="NCBIfam" id="NF002634">
    <property type="entry name" value="PRK02304.1-3"/>
    <property type="match status" value="1"/>
</dbReference>
<dbReference type="NCBIfam" id="NF002636">
    <property type="entry name" value="PRK02304.1-5"/>
    <property type="match status" value="1"/>
</dbReference>
<dbReference type="PANTHER" id="PTHR32315">
    <property type="entry name" value="ADENINE PHOSPHORIBOSYLTRANSFERASE"/>
    <property type="match status" value="1"/>
</dbReference>
<dbReference type="PANTHER" id="PTHR32315:SF3">
    <property type="entry name" value="ADENINE PHOSPHORIBOSYLTRANSFERASE"/>
    <property type="match status" value="1"/>
</dbReference>
<dbReference type="Pfam" id="PF00156">
    <property type="entry name" value="Pribosyltran"/>
    <property type="match status" value="1"/>
</dbReference>
<dbReference type="SUPFAM" id="SSF53271">
    <property type="entry name" value="PRTase-like"/>
    <property type="match status" value="1"/>
</dbReference>
<dbReference type="PROSITE" id="PS00103">
    <property type="entry name" value="PUR_PYR_PR_TRANSFER"/>
    <property type="match status" value="1"/>
</dbReference>
<gene>
    <name evidence="1" type="primary">apt</name>
    <name type="ordered locus">Acid_7098</name>
</gene>
<comment type="function">
    <text evidence="1">Catalyzes a salvage reaction resulting in the formation of AMP, that is energically less costly than de novo synthesis.</text>
</comment>
<comment type="catalytic activity">
    <reaction evidence="1">
        <text>AMP + diphosphate = 5-phospho-alpha-D-ribose 1-diphosphate + adenine</text>
        <dbReference type="Rhea" id="RHEA:16609"/>
        <dbReference type="ChEBI" id="CHEBI:16708"/>
        <dbReference type="ChEBI" id="CHEBI:33019"/>
        <dbReference type="ChEBI" id="CHEBI:58017"/>
        <dbReference type="ChEBI" id="CHEBI:456215"/>
        <dbReference type="EC" id="2.4.2.7"/>
    </reaction>
</comment>
<comment type="pathway">
    <text evidence="1">Purine metabolism; AMP biosynthesis via salvage pathway; AMP from adenine: step 1/1.</text>
</comment>
<comment type="subunit">
    <text evidence="1">Homodimer.</text>
</comment>
<comment type="subcellular location">
    <subcellularLocation>
        <location evidence="1">Cytoplasm</location>
    </subcellularLocation>
</comment>
<comment type="similarity">
    <text evidence="1">Belongs to the purine/pyrimidine phosphoribosyltransferase family.</text>
</comment>
<accession>Q01QQ9</accession>
<reference key="1">
    <citation type="journal article" date="2009" name="Appl. Environ. Microbiol.">
        <title>Three genomes from the phylum Acidobacteria provide insight into the lifestyles of these microorganisms in soils.</title>
        <authorList>
            <person name="Ward N.L."/>
            <person name="Challacombe J.F."/>
            <person name="Janssen P.H."/>
            <person name="Henrissat B."/>
            <person name="Coutinho P.M."/>
            <person name="Wu M."/>
            <person name="Xie G."/>
            <person name="Haft D.H."/>
            <person name="Sait M."/>
            <person name="Badger J."/>
            <person name="Barabote R.D."/>
            <person name="Bradley B."/>
            <person name="Brettin T.S."/>
            <person name="Brinkac L.M."/>
            <person name="Bruce D."/>
            <person name="Creasy T."/>
            <person name="Daugherty S.C."/>
            <person name="Davidsen T.M."/>
            <person name="DeBoy R.T."/>
            <person name="Detter J.C."/>
            <person name="Dodson R.J."/>
            <person name="Durkin A.S."/>
            <person name="Ganapathy A."/>
            <person name="Gwinn-Giglio M."/>
            <person name="Han C.S."/>
            <person name="Khouri H."/>
            <person name="Kiss H."/>
            <person name="Kothari S.P."/>
            <person name="Madupu R."/>
            <person name="Nelson K.E."/>
            <person name="Nelson W.C."/>
            <person name="Paulsen I."/>
            <person name="Penn K."/>
            <person name="Ren Q."/>
            <person name="Rosovitz M.J."/>
            <person name="Selengut J.D."/>
            <person name="Shrivastava S."/>
            <person name="Sullivan S.A."/>
            <person name="Tapia R."/>
            <person name="Thompson L.S."/>
            <person name="Watkins K.L."/>
            <person name="Yang Q."/>
            <person name="Yu C."/>
            <person name="Zafar N."/>
            <person name="Zhou L."/>
            <person name="Kuske C.R."/>
        </authorList>
    </citation>
    <scope>NUCLEOTIDE SEQUENCE [LARGE SCALE GENOMIC DNA]</scope>
    <source>
        <strain>Ellin6076</strain>
    </source>
</reference>
<proteinExistence type="inferred from homology"/>